<feature type="chain" id="PRO_0000063171" description="Purine nucleoside phosphorylase DeoD-type 1">
    <location>
        <begin position="1"/>
        <end position="238"/>
    </location>
</feature>
<feature type="active site" description="Proton donor" evidence="2">
    <location>
        <position position="205"/>
    </location>
</feature>
<feature type="binding site" evidence="1">
    <location>
        <position position="5"/>
    </location>
    <ligand>
        <name>a purine D-ribonucleoside</name>
        <dbReference type="ChEBI" id="CHEBI:142355"/>
        <note>ligand shared between dimeric partners</note>
    </ligand>
</feature>
<feature type="binding site" description="in other chain" evidence="1">
    <location>
        <position position="21"/>
    </location>
    <ligand>
        <name>phosphate</name>
        <dbReference type="ChEBI" id="CHEBI:43474"/>
        <note>ligand shared between dimeric partners</note>
    </ligand>
</feature>
<feature type="binding site" description="in other chain" evidence="1">
    <location>
        <position position="25"/>
    </location>
    <ligand>
        <name>phosphate</name>
        <dbReference type="ChEBI" id="CHEBI:43474"/>
        <note>ligand shared between dimeric partners</note>
    </ligand>
</feature>
<feature type="binding site" evidence="1">
    <location>
        <position position="44"/>
    </location>
    <ligand>
        <name>phosphate</name>
        <dbReference type="ChEBI" id="CHEBI:43474"/>
        <note>ligand shared between dimeric partners</note>
    </ligand>
</feature>
<feature type="binding site" description="in other chain" evidence="1">
    <location>
        <begin position="88"/>
        <end position="91"/>
    </location>
    <ligand>
        <name>phosphate</name>
        <dbReference type="ChEBI" id="CHEBI:43474"/>
        <note>ligand shared between dimeric partners</note>
    </ligand>
</feature>
<feature type="binding site" description="in other chain" evidence="1">
    <location>
        <begin position="180"/>
        <end position="182"/>
    </location>
    <ligand>
        <name>a purine D-ribonucleoside</name>
        <dbReference type="ChEBI" id="CHEBI:142355"/>
        <note>ligand shared between dimeric partners</note>
    </ligand>
</feature>
<feature type="binding site" description="in other chain" evidence="1">
    <location>
        <begin position="204"/>
        <end position="205"/>
    </location>
    <ligand>
        <name>a purine D-ribonucleoside</name>
        <dbReference type="ChEBI" id="CHEBI:142355"/>
        <note>ligand shared between dimeric partners</note>
    </ligand>
</feature>
<feature type="site" description="Important for catalytic activity" evidence="2">
    <location>
        <position position="218"/>
    </location>
</feature>
<organism>
    <name type="scientific">Aliivibrio fischeri (strain ATCC 700601 / ES114)</name>
    <name type="common">Vibrio fischeri</name>
    <dbReference type="NCBI Taxonomy" id="312309"/>
    <lineage>
        <taxon>Bacteria</taxon>
        <taxon>Pseudomonadati</taxon>
        <taxon>Pseudomonadota</taxon>
        <taxon>Gammaproteobacteria</taxon>
        <taxon>Vibrionales</taxon>
        <taxon>Vibrionaceae</taxon>
        <taxon>Aliivibrio</taxon>
    </lineage>
</organism>
<sequence>MATPHINAEMGDFADVVLMPGDPIRAKYIAETFLDDVVQVCDVRNMYGFTGTYKGRKISVMGHGMGIPSCSIYMTELIKDFGVKKVIRVGSCGAVNEGIKVRDVVIGMGACTDSKVNRIRFKDHDFAAIADYEMVRNAELAAQARGIDVKVGNLFSAELFYTPDPSMFDLMDKYGIVGVEMEAAGMYGVAAEYGAKALAICTVSDHIKTGEQTTSDERATTFDEMMLIALDSVLLGDK</sequence>
<keyword id="KW-0328">Glycosyltransferase</keyword>
<keyword id="KW-1185">Reference proteome</keyword>
<keyword id="KW-0808">Transferase</keyword>
<gene>
    <name evidence="2" type="primary">deoD1</name>
    <name type="ordered locus">VF_0507</name>
</gene>
<protein>
    <recommendedName>
        <fullName evidence="2">Purine nucleoside phosphorylase DeoD-type 1</fullName>
        <shortName evidence="2">PNP 1</shortName>
        <ecNumber evidence="2">2.4.2.1</ecNumber>
    </recommendedName>
</protein>
<accession>Q5E7J4</accession>
<name>DEOD1_ALIF1</name>
<evidence type="ECO:0000250" key="1">
    <source>
        <dbReference type="UniProtKB" id="P50389"/>
    </source>
</evidence>
<evidence type="ECO:0000255" key="2">
    <source>
        <dbReference type="HAMAP-Rule" id="MF_01627"/>
    </source>
</evidence>
<comment type="function">
    <text evidence="2">Catalyzes the reversible phosphorolytic breakdown of the N-glycosidic bond in the beta-(deoxy)ribonucleoside molecules, with the formation of the corresponding free purine bases and pentose-1-phosphate.</text>
</comment>
<comment type="catalytic activity">
    <reaction evidence="2">
        <text>a purine D-ribonucleoside + phosphate = a purine nucleobase + alpha-D-ribose 1-phosphate</text>
        <dbReference type="Rhea" id="RHEA:19805"/>
        <dbReference type="ChEBI" id="CHEBI:26386"/>
        <dbReference type="ChEBI" id="CHEBI:43474"/>
        <dbReference type="ChEBI" id="CHEBI:57720"/>
        <dbReference type="ChEBI" id="CHEBI:142355"/>
        <dbReference type="EC" id="2.4.2.1"/>
    </reaction>
</comment>
<comment type="catalytic activity">
    <reaction evidence="2">
        <text>a purine 2'-deoxy-D-ribonucleoside + phosphate = a purine nucleobase + 2-deoxy-alpha-D-ribose 1-phosphate</text>
        <dbReference type="Rhea" id="RHEA:36431"/>
        <dbReference type="ChEBI" id="CHEBI:26386"/>
        <dbReference type="ChEBI" id="CHEBI:43474"/>
        <dbReference type="ChEBI" id="CHEBI:57259"/>
        <dbReference type="ChEBI" id="CHEBI:142361"/>
        <dbReference type="EC" id="2.4.2.1"/>
    </reaction>
</comment>
<comment type="subunit">
    <text evidence="2">Homohexamer; trimer of homodimers.</text>
</comment>
<comment type="similarity">
    <text evidence="2">Belongs to the PNP/UDP phosphorylase family.</text>
</comment>
<dbReference type="EC" id="2.4.2.1" evidence="2"/>
<dbReference type="EMBL" id="CP000020">
    <property type="protein sequence ID" value="AAW85002.1"/>
    <property type="molecule type" value="Genomic_DNA"/>
</dbReference>
<dbReference type="RefSeq" id="YP_203890.1">
    <property type="nucleotide sequence ID" value="NC_006840.2"/>
</dbReference>
<dbReference type="SMR" id="Q5E7J4"/>
<dbReference type="STRING" id="312309.VF_0507"/>
<dbReference type="EnsemblBacteria" id="AAW85002">
    <property type="protein sequence ID" value="AAW85002"/>
    <property type="gene ID" value="VF_0507"/>
</dbReference>
<dbReference type="GeneID" id="54163144"/>
<dbReference type="KEGG" id="vfi:VF_0507"/>
<dbReference type="PATRIC" id="fig|312309.11.peg.498"/>
<dbReference type="eggNOG" id="COG0813">
    <property type="taxonomic scope" value="Bacteria"/>
</dbReference>
<dbReference type="HOGENOM" id="CLU_068457_2_0_6"/>
<dbReference type="OrthoDB" id="9782889at2"/>
<dbReference type="Proteomes" id="UP000000537">
    <property type="component" value="Chromosome I"/>
</dbReference>
<dbReference type="GO" id="GO:0005829">
    <property type="term" value="C:cytosol"/>
    <property type="evidence" value="ECO:0007669"/>
    <property type="project" value="TreeGrafter"/>
</dbReference>
<dbReference type="GO" id="GO:0004731">
    <property type="term" value="F:purine-nucleoside phosphorylase activity"/>
    <property type="evidence" value="ECO:0007669"/>
    <property type="project" value="UniProtKB-UniRule"/>
</dbReference>
<dbReference type="GO" id="GO:0006152">
    <property type="term" value="P:purine nucleoside catabolic process"/>
    <property type="evidence" value="ECO:0007669"/>
    <property type="project" value="TreeGrafter"/>
</dbReference>
<dbReference type="CDD" id="cd09006">
    <property type="entry name" value="PNP_EcPNPI-like"/>
    <property type="match status" value="1"/>
</dbReference>
<dbReference type="FunFam" id="3.40.50.1580:FF:000002">
    <property type="entry name" value="Purine nucleoside phosphorylase DeoD-type"/>
    <property type="match status" value="1"/>
</dbReference>
<dbReference type="Gene3D" id="3.40.50.1580">
    <property type="entry name" value="Nucleoside phosphorylase domain"/>
    <property type="match status" value="1"/>
</dbReference>
<dbReference type="HAMAP" id="MF_01627">
    <property type="entry name" value="Pur_nucleosid_phosp"/>
    <property type="match status" value="1"/>
</dbReference>
<dbReference type="InterPro" id="IPR004402">
    <property type="entry name" value="DeoD-type"/>
</dbReference>
<dbReference type="InterPro" id="IPR018016">
    <property type="entry name" value="Nucleoside_phosphorylase_CS"/>
</dbReference>
<dbReference type="InterPro" id="IPR000845">
    <property type="entry name" value="Nucleoside_phosphorylase_d"/>
</dbReference>
<dbReference type="InterPro" id="IPR035994">
    <property type="entry name" value="Nucleoside_phosphorylase_sf"/>
</dbReference>
<dbReference type="NCBIfam" id="TIGR00107">
    <property type="entry name" value="deoD"/>
    <property type="match status" value="1"/>
</dbReference>
<dbReference type="NCBIfam" id="NF004489">
    <property type="entry name" value="PRK05819.1"/>
    <property type="match status" value="1"/>
</dbReference>
<dbReference type="NCBIfam" id="NF009914">
    <property type="entry name" value="PRK13374.1"/>
    <property type="match status" value="1"/>
</dbReference>
<dbReference type="PANTHER" id="PTHR43691:SF2">
    <property type="entry name" value="PURINE NUCLEOSIDE PHOSPHORYLASE DEOD-TYPE"/>
    <property type="match status" value="1"/>
</dbReference>
<dbReference type="PANTHER" id="PTHR43691">
    <property type="entry name" value="URIDINE PHOSPHORYLASE"/>
    <property type="match status" value="1"/>
</dbReference>
<dbReference type="Pfam" id="PF01048">
    <property type="entry name" value="PNP_UDP_1"/>
    <property type="match status" value="1"/>
</dbReference>
<dbReference type="SUPFAM" id="SSF53167">
    <property type="entry name" value="Purine and uridine phosphorylases"/>
    <property type="match status" value="1"/>
</dbReference>
<dbReference type="PROSITE" id="PS01232">
    <property type="entry name" value="PNP_UDP_1"/>
    <property type="match status" value="1"/>
</dbReference>
<reference key="1">
    <citation type="journal article" date="2005" name="Proc. Natl. Acad. Sci. U.S.A.">
        <title>Complete genome sequence of Vibrio fischeri: a symbiotic bacterium with pathogenic congeners.</title>
        <authorList>
            <person name="Ruby E.G."/>
            <person name="Urbanowski M."/>
            <person name="Campbell J."/>
            <person name="Dunn A."/>
            <person name="Faini M."/>
            <person name="Gunsalus R."/>
            <person name="Lostroh P."/>
            <person name="Lupp C."/>
            <person name="McCann J."/>
            <person name="Millikan D."/>
            <person name="Schaefer A."/>
            <person name="Stabb E."/>
            <person name="Stevens A."/>
            <person name="Visick K."/>
            <person name="Whistler C."/>
            <person name="Greenberg E.P."/>
        </authorList>
    </citation>
    <scope>NUCLEOTIDE SEQUENCE [LARGE SCALE GENOMIC DNA]</scope>
    <source>
        <strain>ATCC 700601 / ES114</strain>
    </source>
</reference>
<proteinExistence type="inferred from homology"/>